<reference key="1">
    <citation type="journal article" date="2006" name="PLoS Genet.">
        <title>Secrets of soil survival revealed by the genome sequence of Arthrobacter aurescens TC1.</title>
        <authorList>
            <person name="Mongodin E.F."/>
            <person name="Shapir N."/>
            <person name="Daugherty S.C."/>
            <person name="DeBoy R.T."/>
            <person name="Emerson J.B."/>
            <person name="Shvartzbeyn A."/>
            <person name="Radune D."/>
            <person name="Vamathevan J."/>
            <person name="Riggs F."/>
            <person name="Grinberg V."/>
            <person name="Khouri H.M."/>
            <person name="Wackett L.P."/>
            <person name="Nelson K.E."/>
            <person name="Sadowsky M.J."/>
        </authorList>
    </citation>
    <scope>NUCLEOTIDE SEQUENCE [LARGE SCALE GENOMIC DNA]</scope>
    <source>
        <strain>TC1</strain>
    </source>
</reference>
<feature type="chain" id="PRO_0000319637" description="Phosphoribosyl-ATP pyrophosphatase">
    <location>
        <begin position="1"/>
        <end position="87"/>
    </location>
</feature>
<gene>
    <name evidence="1" type="primary">hisE</name>
    <name type="ordered locus">AAur_1830</name>
</gene>
<comment type="catalytic activity">
    <reaction evidence="1">
        <text>1-(5-phospho-beta-D-ribosyl)-ATP + H2O = 1-(5-phospho-beta-D-ribosyl)-5'-AMP + diphosphate + H(+)</text>
        <dbReference type="Rhea" id="RHEA:22828"/>
        <dbReference type="ChEBI" id="CHEBI:15377"/>
        <dbReference type="ChEBI" id="CHEBI:15378"/>
        <dbReference type="ChEBI" id="CHEBI:33019"/>
        <dbReference type="ChEBI" id="CHEBI:59457"/>
        <dbReference type="ChEBI" id="CHEBI:73183"/>
        <dbReference type="EC" id="3.6.1.31"/>
    </reaction>
</comment>
<comment type="pathway">
    <text evidence="1">Amino-acid biosynthesis; L-histidine biosynthesis; L-histidine from 5-phospho-alpha-D-ribose 1-diphosphate: step 2/9.</text>
</comment>
<comment type="subcellular location">
    <subcellularLocation>
        <location evidence="1">Cytoplasm</location>
    </subcellularLocation>
</comment>
<comment type="similarity">
    <text evidence="1">Belongs to the PRA-PH family.</text>
</comment>
<comment type="sequence caution" evidence="2">
    <conflict type="erroneous initiation">
        <sequence resource="EMBL-CDS" id="ABM08649"/>
    </conflict>
</comment>
<sequence>MKNFETLFAELSEKAATRPAGSRTVAELDSGIHGIGKKVVEEAAEVWMAAEYESDEAAAEEISQLLYHLQVLMLAKGLSLEDVYKHL</sequence>
<keyword id="KW-0028">Amino-acid biosynthesis</keyword>
<keyword id="KW-0067">ATP-binding</keyword>
<keyword id="KW-0963">Cytoplasm</keyword>
<keyword id="KW-0368">Histidine biosynthesis</keyword>
<keyword id="KW-0378">Hydrolase</keyword>
<keyword id="KW-0547">Nucleotide-binding</keyword>
<proteinExistence type="inferred from homology"/>
<name>HIS2_PAEAT</name>
<protein>
    <recommendedName>
        <fullName evidence="1">Phosphoribosyl-ATP pyrophosphatase</fullName>
        <shortName evidence="1">PRA-PH</shortName>
        <ecNumber evidence="1">3.6.1.31</ecNumber>
    </recommendedName>
</protein>
<organism>
    <name type="scientific">Paenarthrobacter aurescens (strain TC1)</name>
    <dbReference type="NCBI Taxonomy" id="290340"/>
    <lineage>
        <taxon>Bacteria</taxon>
        <taxon>Bacillati</taxon>
        <taxon>Actinomycetota</taxon>
        <taxon>Actinomycetes</taxon>
        <taxon>Micrococcales</taxon>
        <taxon>Micrococcaceae</taxon>
        <taxon>Paenarthrobacter</taxon>
    </lineage>
</organism>
<evidence type="ECO:0000255" key="1">
    <source>
        <dbReference type="HAMAP-Rule" id="MF_01020"/>
    </source>
</evidence>
<evidence type="ECO:0000305" key="2"/>
<accession>A1R5R9</accession>
<dbReference type="EC" id="3.6.1.31" evidence="1"/>
<dbReference type="EMBL" id="CP000474">
    <property type="protein sequence ID" value="ABM08649.1"/>
    <property type="status" value="ALT_INIT"/>
    <property type="molecule type" value="Genomic_DNA"/>
</dbReference>
<dbReference type="RefSeq" id="WP_018778638.1">
    <property type="nucleotide sequence ID" value="NC_008711.1"/>
</dbReference>
<dbReference type="SMR" id="A1R5R9"/>
<dbReference type="STRING" id="290340.AAur_1830"/>
<dbReference type="KEGG" id="aau:AAur_1830"/>
<dbReference type="eggNOG" id="COG0140">
    <property type="taxonomic scope" value="Bacteria"/>
</dbReference>
<dbReference type="HOGENOM" id="CLU_123337_2_0_11"/>
<dbReference type="OrthoDB" id="3212875at2"/>
<dbReference type="UniPathway" id="UPA00031">
    <property type="reaction ID" value="UER00007"/>
</dbReference>
<dbReference type="Proteomes" id="UP000000637">
    <property type="component" value="Chromosome"/>
</dbReference>
<dbReference type="GO" id="GO:0005737">
    <property type="term" value="C:cytoplasm"/>
    <property type="evidence" value="ECO:0007669"/>
    <property type="project" value="UniProtKB-SubCell"/>
</dbReference>
<dbReference type="GO" id="GO:0005524">
    <property type="term" value="F:ATP binding"/>
    <property type="evidence" value="ECO:0007669"/>
    <property type="project" value="UniProtKB-KW"/>
</dbReference>
<dbReference type="GO" id="GO:0004636">
    <property type="term" value="F:phosphoribosyl-ATP diphosphatase activity"/>
    <property type="evidence" value="ECO:0007669"/>
    <property type="project" value="UniProtKB-UniRule"/>
</dbReference>
<dbReference type="GO" id="GO:0000105">
    <property type="term" value="P:L-histidine biosynthetic process"/>
    <property type="evidence" value="ECO:0007669"/>
    <property type="project" value="UniProtKB-UniRule"/>
</dbReference>
<dbReference type="CDD" id="cd11547">
    <property type="entry name" value="NTP-PPase_HisE"/>
    <property type="match status" value="1"/>
</dbReference>
<dbReference type="Gene3D" id="1.10.287.1080">
    <property type="entry name" value="MazG-like"/>
    <property type="match status" value="1"/>
</dbReference>
<dbReference type="HAMAP" id="MF_01020">
    <property type="entry name" value="HisE"/>
    <property type="match status" value="1"/>
</dbReference>
<dbReference type="InterPro" id="IPR008179">
    <property type="entry name" value="HisE"/>
</dbReference>
<dbReference type="InterPro" id="IPR021130">
    <property type="entry name" value="PRib-ATP_PPHydrolase-like"/>
</dbReference>
<dbReference type="NCBIfam" id="TIGR03188">
    <property type="entry name" value="histidine_hisI"/>
    <property type="match status" value="1"/>
</dbReference>
<dbReference type="NCBIfam" id="NF001610">
    <property type="entry name" value="PRK00400.1-1"/>
    <property type="match status" value="1"/>
</dbReference>
<dbReference type="PANTHER" id="PTHR42945">
    <property type="entry name" value="HISTIDINE BIOSYNTHESIS BIFUNCTIONAL PROTEIN"/>
    <property type="match status" value="1"/>
</dbReference>
<dbReference type="PANTHER" id="PTHR42945:SF1">
    <property type="entry name" value="HISTIDINE BIOSYNTHESIS BIFUNCTIONAL PROTEIN HIS7"/>
    <property type="match status" value="1"/>
</dbReference>
<dbReference type="Pfam" id="PF01503">
    <property type="entry name" value="PRA-PH"/>
    <property type="match status" value="1"/>
</dbReference>
<dbReference type="SUPFAM" id="SSF101386">
    <property type="entry name" value="all-alpha NTP pyrophosphatases"/>
    <property type="match status" value="1"/>
</dbReference>